<evidence type="ECO:0000255" key="1">
    <source>
        <dbReference type="HAMAP-Rule" id="MF_00409"/>
    </source>
</evidence>
<dbReference type="EC" id="2.7.1.130" evidence="1"/>
<dbReference type="EMBL" id="CU207211">
    <property type="protein sequence ID" value="CAL62618.1"/>
    <property type="molecule type" value="Genomic_DNA"/>
</dbReference>
<dbReference type="SMR" id="A4G7Y1"/>
<dbReference type="STRING" id="204773.HEAR2490"/>
<dbReference type="KEGG" id="har:HEAR2490"/>
<dbReference type="eggNOG" id="COG1663">
    <property type="taxonomic scope" value="Bacteria"/>
</dbReference>
<dbReference type="HOGENOM" id="CLU_038816_2_0_4"/>
<dbReference type="OrthoDB" id="9766423at2"/>
<dbReference type="UniPathway" id="UPA00359">
    <property type="reaction ID" value="UER00482"/>
</dbReference>
<dbReference type="Proteomes" id="UP000006697">
    <property type="component" value="Chromosome"/>
</dbReference>
<dbReference type="GO" id="GO:0005886">
    <property type="term" value="C:plasma membrane"/>
    <property type="evidence" value="ECO:0007669"/>
    <property type="project" value="TreeGrafter"/>
</dbReference>
<dbReference type="GO" id="GO:0005524">
    <property type="term" value="F:ATP binding"/>
    <property type="evidence" value="ECO:0007669"/>
    <property type="project" value="UniProtKB-UniRule"/>
</dbReference>
<dbReference type="GO" id="GO:0009029">
    <property type="term" value="F:tetraacyldisaccharide 4'-kinase activity"/>
    <property type="evidence" value="ECO:0007669"/>
    <property type="project" value="UniProtKB-UniRule"/>
</dbReference>
<dbReference type="GO" id="GO:0009245">
    <property type="term" value="P:lipid A biosynthetic process"/>
    <property type="evidence" value="ECO:0007669"/>
    <property type="project" value="UniProtKB-UniRule"/>
</dbReference>
<dbReference type="GO" id="GO:0009244">
    <property type="term" value="P:lipopolysaccharide core region biosynthetic process"/>
    <property type="evidence" value="ECO:0007669"/>
    <property type="project" value="TreeGrafter"/>
</dbReference>
<dbReference type="HAMAP" id="MF_00409">
    <property type="entry name" value="LpxK"/>
    <property type="match status" value="1"/>
</dbReference>
<dbReference type="InterPro" id="IPR003758">
    <property type="entry name" value="LpxK"/>
</dbReference>
<dbReference type="InterPro" id="IPR027417">
    <property type="entry name" value="P-loop_NTPase"/>
</dbReference>
<dbReference type="NCBIfam" id="TIGR00682">
    <property type="entry name" value="lpxK"/>
    <property type="match status" value="1"/>
</dbReference>
<dbReference type="PANTHER" id="PTHR42724">
    <property type="entry name" value="TETRAACYLDISACCHARIDE 4'-KINASE"/>
    <property type="match status" value="1"/>
</dbReference>
<dbReference type="PANTHER" id="PTHR42724:SF1">
    <property type="entry name" value="TETRAACYLDISACCHARIDE 4'-KINASE, MITOCHONDRIAL-RELATED"/>
    <property type="match status" value="1"/>
</dbReference>
<dbReference type="Pfam" id="PF02606">
    <property type="entry name" value="LpxK"/>
    <property type="match status" value="1"/>
</dbReference>
<dbReference type="SUPFAM" id="SSF52540">
    <property type="entry name" value="P-loop containing nucleoside triphosphate hydrolases"/>
    <property type="match status" value="1"/>
</dbReference>
<feature type="chain" id="PRO_0000340837" description="Tetraacyldisaccharide 4'-kinase">
    <location>
        <begin position="1"/>
        <end position="356"/>
    </location>
</feature>
<feature type="binding site" evidence="1">
    <location>
        <begin position="67"/>
        <end position="74"/>
    </location>
    <ligand>
        <name>ATP</name>
        <dbReference type="ChEBI" id="CHEBI:30616"/>
    </ligand>
</feature>
<protein>
    <recommendedName>
        <fullName evidence="1">Tetraacyldisaccharide 4'-kinase</fullName>
        <ecNumber evidence="1">2.7.1.130</ecNumber>
    </recommendedName>
    <alternativeName>
        <fullName evidence="1">Lipid A 4'-kinase</fullName>
    </alternativeName>
</protein>
<keyword id="KW-0067">ATP-binding</keyword>
<keyword id="KW-0418">Kinase</keyword>
<keyword id="KW-0441">Lipid A biosynthesis</keyword>
<keyword id="KW-0444">Lipid biosynthesis</keyword>
<keyword id="KW-0443">Lipid metabolism</keyword>
<keyword id="KW-0547">Nucleotide-binding</keyword>
<keyword id="KW-1185">Reference proteome</keyword>
<keyword id="KW-0808">Transferase</keyword>
<comment type="function">
    <text evidence="1">Transfers the gamma-phosphate of ATP to the 4'-position of a tetraacyldisaccharide 1-phosphate intermediate (termed DS-1-P) to form tetraacyldisaccharide 1,4'-bis-phosphate (lipid IVA).</text>
</comment>
<comment type="catalytic activity">
    <reaction evidence="1">
        <text>a lipid A disaccharide + ATP = a lipid IVA + ADP + H(+)</text>
        <dbReference type="Rhea" id="RHEA:67840"/>
        <dbReference type="ChEBI" id="CHEBI:15378"/>
        <dbReference type="ChEBI" id="CHEBI:30616"/>
        <dbReference type="ChEBI" id="CHEBI:176343"/>
        <dbReference type="ChEBI" id="CHEBI:176425"/>
        <dbReference type="ChEBI" id="CHEBI:456216"/>
        <dbReference type="EC" id="2.7.1.130"/>
    </reaction>
</comment>
<comment type="pathway">
    <text evidence="1">Glycolipid biosynthesis; lipid IV(A) biosynthesis; lipid IV(A) from (3R)-3-hydroxytetradecanoyl-[acyl-carrier-protein] and UDP-N-acetyl-alpha-D-glucosamine: step 6/6.</text>
</comment>
<comment type="similarity">
    <text evidence="1">Belongs to the LpxK family.</text>
</comment>
<reference key="1">
    <citation type="journal article" date="2007" name="PLoS Genet.">
        <title>A tale of two oxidation states: bacterial colonization of arsenic-rich environments.</title>
        <authorList>
            <person name="Muller D."/>
            <person name="Medigue C."/>
            <person name="Koechler S."/>
            <person name="Barbe V."/>
            <person name="Barakat M."/>
            <person name="Talla E."/>
            <person name="Bonnefoy V."/>
            <person name="Krin E."/>
            <person name="Arsene-Ploetze F."/>
            <person name="Carapito C."/>
            <person name="Chandler M."/>
            <person name="Cournoyer B."/>
            <person name="Cruveiller S."/>
            <person name="Dossat C."/>
            <person name="Duval S."/>
            <person name="Heymann M."/>
            <person name="Leize E."/>
            <person name="Lieutaud A."/>
            <person name="Lievremont D."/>
            <person name="Makita Y."/>
            <person name="Mangenot S."/>
            <person name="Nitschke W."/>
            <person name="Ortet P."/>
            <person name="Perdrial N."/>
            <person name="Schoepp B."/>
            <person name="Siguier P."/>
            <person name="Simeonova D.D."/>
            <person name="Rouy Z."/>
            <person name="Segurens B."/>
            <person name="Turlin E."/>
            <person name="Vallenet D."/>
            <person name="van Dorsselaer A."/>
            <person name="Weiss S."/>
            <person name="Weissenbach J."/>
            <person name="Lett M.-C."/>
            <person name="Danchin A."/>
            <person name="Bertin P.N."/>
        </authorList>
    </citation>
    <scope>NUCLEOTIDE SEQUENCE [LARGE SCALE GENOMIC DNA]</scope>
    <source>
        <strain>ULPAs1</strain>
    </source>
</reference>
<gene>
    <name evidence="1" type="primary">lpxK</name>
    <name type="ordered locus">HEAR2490</name>
</gene>
<accession>A4G7Y1</accession>
<organism>
    <name type="scientific">Herminiimonas arsenicoxydans</name>
    <dbReference type="NCBI Taxonomy" id="204773"/>
    <lineage>
        <taxon>Bacteria</taxon>
        <taxon>Pseudomonadati</taxon>
        <taxon>Pseudomonadota</taxon>
        <taxon>Betaproteobacteria</taxon>
        <taxon>Burkholderiales</taxon>
        <taxon>Oxalobacteraceae</taxon>
        <taxon>Herminiimonas</taxon>
    </lineage>
</organism>
<name>LPXK_HERAR</name>
<sequence length="356" mass="38939">MPLALQRSTLEEFFKRTWARRGLAAWLLRPLSAVFGVLSALRRLCYRFGIAKAQRMRVPVIVVGNIFVGGTGKTPLTIWLAQTLRQAGFHPGVISRGYGASSDVPRAVTPDAQAREVGDEPLLIAHRTQCPVMVGRDRVAVAQALLAAHPQVDVIISDDGLQHYRLARDIEIMLFDGRGNGNGWLLPAGPLREPVSRRRDFTVINGSPEETAMPPDVIQMHLSGVMAEPLAATNLPLEDVPSRALRSFSAASTGFSPARILAAAGIGNPERFFAQLRAAGLQFDEMPLPDHYDFVDNPFAAVNADVILITEKDAVKCRQNDALRNDPRVWVVPVTAHLDDAFAEQIVEKLRGHSIA</sequence>
<proteinExistence type="inferred from homology"/>